<reference key="1">
    <citation type="submission" date="2008-02" db="EMBL/GenBank/DDBJ databases">
        <title>Complete sequence of chromosome 1 of Burkholderia cenocepacia MC0-3.</title>
        <authorList>
            <person name="Copeland A."/>
            <person name="Lucas S."/>
            <person name="Lapidus A."/>
            <person name="Barry K."/>
            <person name="Bruce D."/>
            <person name="Goodwin L."/>
            <person name="Glavina del Rio T."/>
            <person name="Dalin E."/>
            <person name="Tice H."/>
            <person name="Pitluck S."/>
            <person name="Chain P."/>
            <person name="Malfatti S."/>
            <person name="Shin M."/>
            <person name="Vergez L."/>
            <person name="Schmutz J."/>
            <person name="Larimer F."/>
            <person name="Land M."/>
            <person name="Hauser L."/>
            <person name="Kyrpides N."/>
            <person name="Mikhailova N."/>
            <person name="Tiedje J."/>
            <person name="Richardson P."/>
        </authorList>
    </citation>
    <scope>NUCLEOTIDE SEQUENCE [LARGE SCALE GENOMIC DNA]</scope>
    <source>
        <strain>MC0-3</strain>
    </source>
</reference>
<organism>
    <name type="scientific">Burkholderia orbicola (strain MC0-3)</name>
    <dbReference type="NCBI Taxonomy" id="406425"/>
    <lineage>
        <taxon>Bacteria</taxon>
        <taxon>Pseudomonadati</taxon>
        <taxon>Pseudomonadota</taxon>
        <taxon>Betaproteobacteria</taxon>
        <taxon>Burkholderiales</taxon>
        <taxon>Burkholderiaceae</taxon>
        <taxon>Burkholderia</taxon>
        <taxon>Burkholderia cepacia complex</taxon>
        <taxon>Burkholderia orbicola</taxon>
    </lineage>
</organism>
<dbReference type="EC" id="3.5.1.5" evidence="1"/>
<dbReference type="EMBL" id="CP000958">
    <property type="protein sequence ID" value="ACA90049.1"/>
    <property type="molecule type" value="Genomic_DNA"/>
</dbReference>
<dbReference type="RefSeq" id="WP_012328046.1">
    <property type="nucleotide sequence ID" value="NC_010508.1"/>
</dbReference>
<dbReference type="SMR" id="B1JX30"/>
<dbReference type="GeneID" id="83047662"/>
<dbReference type="KEGG" id="bcm:Bcenmc03_0871"/>
<dbReference type="HOGENOM" id="CLU_129707_1_1_4"/>
<dbReference type="UniPathway" id="UPA00258">
    <property type="reaction ID" value="UER00370"/>
</dbReference>
<dbReference type="Proteomes" id="UP000002169">
    <property type="component" value="Chromosome 1"/>
</dbReference>
<dbReference type="GO" id="GO:0035550">
    <property type="term" value="C:urease complex"/>
    <property type="evidence" value="ECO:0007669"/>
    <property type="project" value="InterPro"/>
</dbReference>
<dbReference type="GO" id="GO:0009039">
    <property type="term" value="F:urease activity"/>
    <property type="evidence" value="ECO:0007669"/>
    <property type="project" value="UniProtKB-UniRule"/>
</dbReference>
<dbReference type="GO" id="GO:0043419">
    <property type="term" value="P:urea catabolic process"/>
    <property type="evidence" value="ECO:0007669"/>
    <property type="project" value="UniProtKB-UniRule"/>
</dbReference>
<dbReference type="CDD" id="cd00407">
    <property type="entry name" value="Urease_beta"/>
    <property type="match status" value="1"/>
</dbReference>
<dbReference type="FunFam" id="2.10.150.10:FF:000001">
    <property type="entry name" value="Urease subunit beta"/>
    <property type="match status" value="1"/>
</dbReference>
<dbReference type="Gene3D" id="2.10.150.10">
    <property type="entry name" value="Urease, beta subunit"/>
    <property type="match status" value="1"/>
</dbReference>
<dbReference type="HAMAP" id="MF_01954">
    <property type="entry name" value="Urease_beta"/>
    <property type="match status" value="1"/>
</dbReference>
<dbReference type="InterPro" id="IPR002019">
    <property type="entry name" value="Urease_beta-like"/>
</dbReference>
<dbReference type="InterPro" id="IPR036461">
    <property type="entry name" value="Urease_betasu_sf"/>
</dbReference>
<dbReference type="InterPro" id="IPR050069">
    <property type="entry name" value="Urease_subunit"/>
</dbReference>
<dbReference type="NCBIfam" id="NF009682">
    <property type="entry name" value="PRK13203.1"/>
    <property type="match status" value="1"/>
</dbReference>
<dbReference type="NCBIfam" id="TIGR00192">
    <property type="entry name" value="urease_beta"/>
    <property type="match status" value="1"/>
</dbReference>
<dbReference type="PANTHER" id="PTHR33569">
    <property type="entry name" value="UREASE"/>
    <property type="match status" value="1"/>
</dbReference>
<dbReference type="PANTHER" id="PTHR33569:SF1">
    <property type="entry name" value="UREASE"/>
    <property type="match status" value="1"/>
</dbReference>
<dbReference type="Pfam" id="PF00699">
    <property type="entry name" value="Urease_beta"/>
    <property type="match status" value="1"/>
</dbReference>
<dbReference type="SUPFAM" id="SSF51278">
    <property type="entry name" value="Urease, beta-subunit"/>
    <property type="match status" value="1"/>
</dbReference>
<sequence length="101" mass="10841">MIPGEILTDDGEHELNAGRATLSLVVANTGDRPVQVGSHYHFFEVNDALSFDRAVARGFRLNIAAGTAVRFEPGQTRTVELVALAGERAVYGFQGKVMGPL</sequence>
<keyword id="KW-0963">Cytoplasm</keyword>
<keyword id="KW-0378">Hydrolase</keyword>
<evidence type="ECO:0000255" key="1">
    <source>
        <dbReference type="HAMAP-Rule" id="MF_01954"/>
    </source>
</evidence>
<gene>
    <name evidence="1" type="primary">ureB</name>
    <name type="ordered locus">Bcenmc03_0871</name>
</gene>
<name>URE2_BURO0</name>
<protein>
    <recommendedName>
        <fullName evidence="1">Urease subunit beta</fullName>
        <ecNumber evidence="1">3.5.1.5</ecNumber>
    </recommendedName>
    <alternativeName>
        <fullName evidence="1">Urea amidohydrolase subunit beta</fullName>
    </alternativeName>
</protein>
<proteinExistence type="inferred from homology"/>
<comment type="catalytic activity">
    <reaction evidence="1">
        <text>urea + 2 H2O + H(+) = hydrogencarbonate + 2 NH4(+)</text>
        <dbReference type="Rhea" id="RHEA:20557"/>
        <dbReference type="ChEBI" id="CHEBI:15377"/>
        <dbReference type="ChEBI" id="CHEBI:15378"/>
        <dbReference type="ChEBI" id="CHEBI:16199"/>
        <dbReference type="ChEBI" id="CHEBI:17544"/>
        <dbReference type="ChEBI" id="CHEBI:28938"/>
        <dbReference type="EC" id="3.5.1.5"/>
    </reaction>
</comment>
<comment type="pathway">
    <text evidence="1">Nitrogen metabolism; urea degradation; CO(2) and NH(3) from urea (urease route): step 1/1.</text>
</comment>
<comment type="subunit">
    <text evidence="1">Heterotrimer of UreA (gamma), UreB (beta) and UreC (alpha) subunits. Three heterotrimers associate to form the active enzyme.</text>
</comment>
<comment type="subcellular location">
    <subcellularLocation>
        <location evidence="1">Cytoplasm</location>
    </subcellularLocation>
</comment>
<comment type="similarity">
    <text evidence="1">Belongs to the urease beta subunit family.</text>
</comment>
<accession>B1JX30</accession>
<feature type="chain" id="PRO_1000188914" description="Urease subunit beta">
    <location>
        <begin position="1"/>
        <end position="101"/>
    </location>
</feature>